<proteinExistence type="inferred from homology"/>
<feature type="chain" id="PRO_1000185335" description="DNA-directed RNA polymerase subunit epsilon">
    <location>
        <begin position="1"/>
        <end position="71"/>
    </location>
</feature>
<organism>
    <name type="scientific">Staphylococcus carnosus (strain TM300)</name>
    <dbReference type="NCBI Taxonomy" id="396513"/>
    <lineage>
        <taxon>Bacteria</taxon>
        <taxon>Bacillati</taxon>
        <taxon>Bacillota</taxon>
        <taxon>Bacilli</taxon>
        <taxon>Bacillales</taxon>
        <taxon>Staphylococcaceae</taxon>
        <taxon>Staphylococcus</taxon>
    </lineage>
</organism>
<comment type="function">
    <text evidence="1">A non-essential component of RNA polymerase (RNAP).</text>
</comment>
<comment type="catalytic activity">
    <reaction evidence="1">
        <text>RNA(n) + a ribonucleoside 5'-triphosphate = RNA(n+1) + diphosphate</text>
        <dbReference type="Rhea" id="RHEA:21248"/>
        <dbReference type="Rhea" id="RHEA-COMP:14527"/>
        <dbReference type="Rhea" id="RHEA-COMP:17342"/>
        <dbReference type="ChEBI" id="CHEBI:33019"/>
        <dbReference type="ChEBI" id="CHEBI:61557"/>
        <dbReference type="ChEBI" id="CHEBI:140395"/>
        <dbReference type="EC" id="2.7.7.6"/>
    </reaction>
</comment>
<comment type="subunit">
    <text evidence="1">RNAP is composed of a core of 2 alpha, a beta and a beta' subunit. The core is associated with a delta subunit, and at least one of epsilon or omega. When a sigma factor is associated with the core the holoenzyme is formed, which can initiate transcription.</text>
</comment>
<comment type="similarity">
    <text evidence="1">Belongs to the RNA polymerase subunit epsilon family.</text>
</comment>
<gene>
    <name evidence="1" type="primary">rpoY</name>
    <name type="ordered locus">Sca_0714</name>
</gene>
<name>RPOY_STACT</name>
<sequence>MAIYKVFFQDDKSEVIVRENTHTIYVEGNSEEEVRKYLKNRDYNIEFITKLEGAHLEYEQQSEDYKVEHIQ</sequence>
<accession>B9DQ10</accession>
<dbReference type="EC" id="2.7.7.6" evidence="1"/>
<dbReference type="EMBL" id="AM295250">
    <property type="protein sequence ID" value="CAL27625.1"/>
    <property type="molecule type" value="Genomic_DNA"/>
</dbReference>
<dbReference type="RefSeq" id="WP_015899967.1">
    <property type="nucleotide sequence ID" value="NC_012121.1"/>
</dbReference>
<dbReference type="SMR" id="B9DQ10"/>
<dbReference type="GeneID" id="93795652"/>
<dbReference type="KEGG" id="sca:SCA_0714"/>
<dbReference type="eggNOG" id="COG5503">
    <property type="taxonomic scope" value="Bacteria"/>
</dbReference>
<dbReference type="HOGENOM" id="CLU_187518_1_0_9"/>
<dbReference type="OrthoDB" id="2147503at2"/>
<dbReference type="BioCyc" id="SCAR396513:SCA_RS03625-MONOMER"/>
<dbReference type="Proteomes" id="UP000000444">
    <property type="component" value="Chromosome"/>
</dbReference>
<dbReference type="GO" id="GO:0000428">
    <property type="term" value="C:DNA-directed RNA polymerase complex"/>
    <property type="evidence" value="ECO:0007669"/>
    <property type="project" value="UniProtKB-KW"/>
</dbReference>
<dbReference type="GO" id="GO:0003677">
    <property type="term" value="F:DNA binding"/>
    <property type="evidence" value="ECO:0007669"/>
    <property type="project" value="UniProtKB-UniRule"/>
</dbReference>
<dbReference type="GO" id="GO:0003899">
    <property type="term" value="F:DNA-directed RNA polymerase activity"/>
    <property type="evidence" value="ECO:0007669"/>
    <property type="project" value="UniProtKB-UniRule"/>
</dbReference>
<dbReference type="GO" id="GO:0006351">
    <property type="term" value="P:DNA-templated transcription"/>
    <property type="evidence" value="ECO:0007669"/>
    <property type="project" value="UniProtKB-UniRule"/>
</dbReference>
<dbReference type="Gene3D" id="3.10.20.730">
    <property type="entry name" value="RNAP, epsilon subunit-like"/>
    <property type="match status" value="1"/>
</dbReference>
<dbReference type="HAMAP" id="MF_01553">
    <property type="entry name" value="RNApol_bact_RpoY"/>
    <property type="match status" value="1"/>
</dbReference>
<dbReference type="InterPro" id="IPR009907">
    <property type="entry name" value="RpoY"/>
</dbReference>
<dbReference type="NCBIfam" id="NF010188">
    <property type="entry name" value="PRK13667.1"/>
    <property type="match status" value="1"/>
</dbReference>
<dbReference type="Pfam" id="PF07288">
    <property type="entry name" value="RpoY"/>
    <property type="match status" value="1"/>
</dbReference>
<evidence type="ECO:0000255" key="1">
    <source>
        <dbReference type="HAMAP-Rule" id="MF_01553"/>
    </source>
</evidence>
<keyword id="KW-0240">DNA-directed RNA polymerase</keyword>
<keyword id="KW-0548">Nucleotidyltransferase</keyword>
<keyword id="KW-1185">Reference proteome</keyword>
<keyword id="KW-0804">Transcription</keyword>
<keyword id="KW-0808">Transferase</keyword>
<reference key="1">
    <citation type="journal article" date="2009" name="Appl. Environ. Microbiol.">
        <title>Genome analysis of the meat starter culture bacterium Staphylococcus carnosus TM300.</title>
        <authorList>
            <person name="Rosenstein R."/>
            <person name="Nerz C."/>
            <person name="Biswas L."/>
            <person name="Resch A."/>
            <person name="Raddatz G."/>
            <person name="Schuster S.C."/>
            <person name="Goetz F."/>
        </authorList>
    </citation>
    <scope>NUCLEOTIDE SEQUENCE [LARGE SCALE GENOMIC DNA]</scope>
    <source>
        <strain>TM300</strain>
    </source>
</reference>
<protein>
    <recommendedName>
        <fullName evidence="1">DNA-directed RNA polymerase subunit epsilon</fullName>
        <shortName evidence="1">RNAP epsilon subunit</shortName>
        <ecNumber evidence="1">2.7.7.6</ecNumber>
    </recommendedName>
    <alternativeName>
        <fullName evidence="1">RNA polymerase epsilon subunit</fullName>
    </alternativeName>
    <alternativeName>
        <fullName evidence="1">Transcriptase subunit epsilon</fullName>
    </alternativeName>
</protein>